<gene>
    <name type="ordered locus">YPTB2121</name>
</gene>
<feature type="chain" id="PRO_1000064542" description="UPF0259 membrane protein YPTB2121">
    <location>
        <begin position="1"/>
        <end position="256"/>
    </location>
</feature>
<feature type="transmembrane region" description="Helical" evidence="1">
    <location>
        <begin position="20"/>
        <end position="40"/>
    </location>
</feature>
<feature type="transmembrane region" description="Helical" evidence="1">
    <location>
        <begin position="90"/>
        <end position="110"/>
    </location>
</feature>
<feature type="transmembrane region" description="Helical" evidence="1">
    <location>
        <begin position="118"/>
        <end position="138"/>
    </location>
</feature>
<feature type="transmembrane region" description="Helical" evidence="1">
    <location>
        <begin position="141"/>
        <end position="161"/>
    </location>
</feature>
<feature type="transmembrane region" description="Helical" evidence="1">
    <location>
        <begin position="192"/>
        <end position="212"/>
    </location>
</feature>
<feature type="transmembrane region" description="Helical" evidence="1">
    <location>
        <begin position="221"/>
        <end position="241"/>
    </location>
</feature>
<reference key="1">
    <citation type="journal article" date="2004" name="Proc. Natl. Acad. Sci. U.S.A.">
        <title>Insights into the evolution of Yersinia pestis through whole-genome comparison with Yersinia pseudotuberculosis.</title>
        <authorList>
            <person name="Chain P.S.G."/>
            <person name="Carniel E."/>
            <person name="Larimer F.W."/>
            <person name="Lamerdin J."/>
            <person name="Stoutland P.O."/>
            <person name="Regala W.M."/>
            <person name="Georgescu A.M."/>
            <person name="Vergez L.M."/>
            <person name="Land M.L."/>
            <person name="Motin V.L."/>
            <person name="Brubaker R.R."/>
            <person name="Fowler J."/>
            <person name="Hinnebusch J."/>
            <person name="Marceau M."/>
            <person name="Medigue C."/>
            <person name="Simonet M."/>
            <person name="Chenal-Francisque V."/>
            <person name="Souza B."/>
            <person name="Dacheux D."/>
            <person name="Elliott J.M."/>
            <person name="Derbise A."/>
            <person name="Hauser L.J."/>
            <person name="Garcia E."/>
        </authorList>
    </citation>
    <scope>NUCLEOTIDE SEQUENCE [LARGE SCALE GENOMIC DNA]</scope>
    <source>
        <strain>IP32953</strain>
    </source>
</reference>
<proteinExistence type="inferred from homology"/>
<protein>
    <recommendedName>
        <fullName evidence="1">UPF0259 membrane protein YPTB2121</fullName>
    </recommendedName>
</protein>
<accession>Q66AK9</accession>
<keyword id="KW-0997">Cell inner membrane</keyword>
<keyword id="KW-1003">Cell membrane</keyword>
<keyword id="KW-0472">Membrane</keyword>
<keyword id="KW-0812">Transmembrane</keyword>
<keyword id="KW-1133">Transmembrane helix</keyword>
<name>Y2121_YERPS</name>
<dbReference type="EMBL" id="BX936398">
    <property type="protein sequence ID" value="CAH21359.1"/>
    <property type="molecule type" value="Genomic_DNA"/>
</dbReference>
<dbReference type="RefSeq" id="WP_002210639.1">
    <property type="nucleotide sequence ID" value="NZ_CP009712.1"/>
</dbReference>
<dbReference type="KEGG" id="ypo:BZ17_340"/>
<dbReference type="KEGG" id="yps:YPTB2121"/>
<dbReference type="PATRIC" id="fig|273123.14.peg.362"/>
<dbReference type="Proteomes" id="UP000001011">
    <property type="component" value="Chromosome"/>
</dbReference>
<dbReference type="GO" id="GO:0005886">
    <property type="term" value="C:plasma membrane"/>
    <property type="evidence" value="ECO:0007669"/>
    <property type="project" value="UniProtKB-SubCell"/>
</dbReference>
<dbReference type="HAMAP" id="MF_01067">
    <property type="entry name" value="UPF0259"/>
    <property type="match status" value="1"/>
</dbReference>
<dbReference type="InterPro" id="IPR009627">
    <property type="entry name" value="UPF0259"/>
</dbReference>
<dbReference type="NCBIfam" id="NF002774">
    <property type="entry name" value="PRK02868.1"/>
    <property type="match status" value="1"/>
</dbReference>
<dbReference type="Pfam" id="PF06790">
    <property type="entry name" value="UPF0259"/>
    <property type="match status" value="1"/>
</dbReference>
<organism>
    <name type="scientific">Yersinia pseudotuberculosis serotype I (strain IP32953)</name>
    <dbReference type="NCBI Taxonomy" id="273123"/>
    <lineage>
        <taxon>Bacteria</taxon>
        <taxon>Pseudomonadati</taxon>
        <taxon>Pseudomonadota</taxon>
        <taxon>Gammaproteobacteria</taxon>
        <taxon>Enterobacterales</taxon>
        <taxon>Yersiniaceae</taxon>
        <taxon>Yersinia</taxon>
    </lineage>
</organism>
<sequence length="256" mass="27754">MPITANTLYRDSFNFLRNQIAAILLLALLTAFITVMLNQTFMPASEQLSILSIPENDITSSGNLSISEIVSQMTPEQQMVLLRVSAVATFSALVGNVLLVGGLLTLIAMVSQGRRVSALQAIGLSLPILPRLLVLMFISTLVIQLGLTFFIVPGVAIAIALSLSPIIVTNERMGIFAAMKASAQLAFANVRLIVPAMMLWIAVKLLLLFLISRFTVLPPTIATIVLSTLSNLASALLLVYLFRLYMLLRPVSLDKQ</sequence>
<evidence type="ECO:0000255" key="1">
    <source>
        <dbReference type="HAMAP-Rule" id="MF_01067"/>
    </source>
</evidence>
<comment type="subcellular location">
    <subcellularLocation>
        <location evidence="1">Cell inner membrane</location>
        <topology evidence="1">Multi-pass membrane protein</topology>
    </subcellularLocation>
</comment>
<comment type="similarity">
    <text evidence="1">Belongs to the UPF0259 family.</text>
</comment>